<feature type="signal peptide" evidence="2">
    <location>
        <begin position="1"/>
        <end position="19"/>
    </location>
</feature>
<feature type="propeptide" id="PRO_0000404810" evidence="2">
    <location>
        <begin position="20"/>
        <end position="37"/>
    </location>
</feature>
<feature type="peptide" id="PRO_0000404811" description="Conotoxin VnMEKL-023" evidence="2">
    <location>
        <begin position="41"/>
        <end position="77"/>
    </location>
</feature>
<feature type="disulfide bond" evidence="1">
    <location>
        <begin position="51"/>
        <end position="65"/>
    </location>
</feature>
<feature type="disulfide bond" evidence="1">
    <location>
        <begin position="58"/>
        <end position="69"/>
    </location>
</feature>
<feature type="disulfide bond" evidence="1">
    <location>
        <begin position="64"/>
        <end position="74"/>
    </location>
</feature>
<evidence type="ECO:0000250" key="1"/>
<evidence type="ECO:0000255" key="2"/>
<evidence type="ECO:0000305" key="3"/>
<sequence>MQKLTILLLVAAVLMSTQALIKGGGEKRPKEKIRFLSKRKTTAERWWEGECRGWSNGCTTNSDCCSNNCDGTFCKLW</sequence>
<keyword id="KW-0165">Cleavage on pair of basic residues</keyword>
<keyword id="KW-1015">Disulfide bond</keyword>
<keyword id="KW-0960">Knottin</keyword>
<keyword id="KW-0528">Neurotoxin</keyword>
<keyword id="KW-0964">Secreted</keyword>
<keyword id="KW-0732">Signal</keyword>
<keyword id="KW-0800">Toxin</keyword>
<accession>Q9BPC7</accession>
<organism>
    <name type="scientific">Conus ventricosus</name>
    <name type="common">Mediterranean cone</name>
    <dbReference type="NCBI Taxonomy" id="117992"/>
    <lineage>
        <taxon>Eukaryota</taxon>
        <taxon>Metazoa</taxon>
        <taxon>Spiralia</taxon>
        <taxon>Lophotrochozoa</taxon>
        <taxon>Mollusca</taxon>
        <taxon>Gastropoda</taxon>
        <taxon>Caenogastropoda</taxon>
        <taxon>Neogastropoda</taxon>
        <taxon>Conoidea</taxon>
        <taxon>Conidae</taxon>
        <taxon>Conus</taxon>
        <taxon>Lautoconus</taxon>
    </lineage>
</organism>
<protein>
    <recommendedName>
        <fullName>Conotoxin VnMEKL-023</fullName>
    </recommendedName>
</protein>
<name>O263_CONVE</name>
<proteinExistence type="evidence at transcript level"/>
<comment type="subcellular location">
    <subcellularLocation>
        <location evidence="1">Secreted</location>
    </subcellularLocation>
</comment>
<comment type="tissue specificity">
    <text>Expressed by the venom duct.</text>
</comment>
<comment type="domain">
    <text evidence="1">The presence of a 'disulfide through disulfide knot' structurally defines this protein as a knottin.</text>
</comment>
<comment type="domain">
    <text>The cysteine framework is VI/VII (C-C-CC-C-C).</text>
</comment>
<comment type="similarity">
    <text evidence="3">Belongs to the conotoxin O2 superfamily.</text>
</comment>
<dbReference type="EMBL" id="AF215007">
    <property type="protein sequence ID" value="AAG60435.1"/>
    <property type="molecule type" value="mRNA"/>
</dbReference>
<dbReference type="ConoServer" id="694">
    <property type="toxin name" value="Vn6.3 precursor"/>
</dbReference>
<dbReference type="GO" id="GO:0005576">
    <property type="term" value="C:extracellular region"/>
    <property type="evidence" value="ECO:0007669"/>
    <property type="project" value="UniProtKB-SubCell"/>
</dbReference>
<dbReference type="GO" id="GO:0008200">
    <property type="term" value="F:ion channel inhibitor activity"/>
    <property type="evidence" value="ECO:0007669"/>
    <property type="project" value="InterPro"/>
</dbReference>
<dbReference type="GO" id="GO:0090729">
    <property type="term" value="F:toxin activity"/>
    <property type="evidence" value="ECO:0007669"/>
    <property type="project" value="UniProtKB-KW"/>
</dbReference>
<dbReference type="InterPro" id="IPR004214">
    <property type="entry name" value="Conotoxin"/>
</dbReference>
<dbReference type="Pfam" id="PF02950">
    <property type="entry name" value="Conotoxin"/>
    <property type="match status" value="1"/>
</dbReference>
<reference key="1">
    <citation type="journal article" date="2001" name="Mol. Biol. Evol.">
        <title>Mechanisms for evolving hypervariability: the case of conopeptides.</title>
        <authorList>
            <person name="Conticello S.G."/>
            <person name="Gilad Y."/>
            <person name="Avidan N."/>
            <person name="Ben-Asher E."/>
            <person name="Levy Z."/>
            <person name="Fainzilber M."/>
        </authorList>
    </citation>
    <scope>NUCLEOTIDE SEQUENCE [MRNA]</scope>
    <source>
        <tissue>Venom duct</tissue>
    </source>
</reference>